<accession>P25671</accession>
<evidence type="ECO:0000250" key="1">
    <source>
        <dbReference type="UniProtKB" id="P60615"/>
    </source>
</evidence>
<evidence type="ECO:0000269" key="2">
    <source>
    </source>
</evidence>
<evidence type="ECO:0000269" key="3">
    <source ref="1"/>
</evidence>
<evidence type="ECO:0000303" key="4">
    <source ref="1"/>
</evidence>
<evidence type="ECO:0000305" key="5"/>
<evidence type="ECO:0000305" key="6">
    <source ref="1"/>
</evidence>
<evidence type="ECO:0007744" key="7">
    <source>
        <dbReference type="PDB" id="2CTX"/>
    </source>
</evidence>
<evidence type="ECO:0007829" key="8">
    <source>
        <dbReference type="PDB" id="2CTX"/>
    </source>
</evidence>
<dbReference type="PDB" id="2CTX">
    <property type="method" value="X-ray"/>
    <property type="resolution" value="2.40 A"/>
    <property type="chains" value="A=1-71"/>
</dbReference>
<dbReference type="PDBsum" id="2CTX"/>
<dbReference type="SMR" id="P25671"/>
<dbReference type="EvolutionaryTrace" id="P25671"/>
<dbReference type="Proteomes" id="UP000694559">
    <property type="component" value="Unplaced"/>
</dbReference>
<dbReference type="GO" id="GO:0005576">
    <property type="term" value="C:extracellular region"/>
    <property type="evidence" value="ECO:0007669"/>
    <property type="project" value="UniProtKB-SubCell"/>
</dbReference>
<dbReference type="GO" id="GO:0030550">
    <property type="term" value="F:acetylcholine receptor inhibitor activity"/>
    <property type="evidence" value="ECO:0007669"/>
    <property type="project" value="UniProtKB-KW"/>
</dbReference>
<dbReference type="GO" id="GO:0099106">
    <property type="term" value="F:ion channel regulator activity"/>
    <property type="evidence" value="ECO:0007669"/>
    <property type="project" value="UniProtKB-KW"/>
</dbReference>
<dbReference type="GO" id="GO:0090729">
    <property type="term" value="F:toxin activity"/>
    <property type="evidence" value="ECO:0007669"/>
    <property type="project" value="UniProtKB-KW"/>
</dbReference>
<dbReference type="CDD" id="cd00206">
    <property type="entry name" value="TFP_snake_toxin"/>
    <property type="match status" value="1"/>
</dbReference>
<dbReference type="Gene3D" id="2.10.60.10">
    <property type="entry name" value="CD59"/>
    <property type="match status" value="1"/>
</dbReference>
<dbReference type="InterPro" id="IPR003571">
    <property type="entry name" value="Snake_3FTx"/>
</dbReference>
<dbReference type="InterPro" id="IPR045860">
    <property type="entry name" value="Snake_toxin-like_sf"/>
</dbReference>
<dbReference type="InterPro" id="IPR018354">
    <property type="entry name" value="Snake_toxin_con_site"/>
</dbReference>
<dbReference type="InterPro" id="IPR054131">
    <property type="entry name" value="Toxin_cobra-type"/>
</dbReference>
<dbReference type="Pfam" id="PF21947">
    <property type="entry name" value="Toxin_cobra-type"/>
    <property type="match status" value="1"/>
</dbReference>
<dbReference type="SUPFAM" id="SSF57302">
    <property type="entry name" value="Snake toxin-like"/>
    <property type="match status" value="1"/>
</dbReference>
<dbReference type="PROSITE" id="PS00272">
    <property type="entry name" value="SNAKE_TOXIN"/>
    <property type="match status" value="1"/>
</dbReference>
<comment type="function">
    <text evidence="1">Binds with high affinity to muscular (alpha-1/CHRNA1) and neuronal (alpha-7/CHRNA7) nicotinic acetylcholine receptor (nAChR) and inhibits acetylcholine from binding to the receptor, thereby impairing neuromuscular and neuronal transmission.</text>
</comment>
<comment type="subcellular location">
    <subcellularLocation>
        <location evidence="3">Secreted</location>
    </subcellularLocation>
</comment>
<comment type="tissue specificity">
    <text evidence="6">Expressed by the venom gland.</text>
</comment>
<comment type="toxic dose">
    <text evidence="3">LD(50) is 0.10 to 0.15 mg/kg by subcutaneous injection.</text>
</comment>
<comment type="similarity">
    <text evidence="5">Belongs to the three-finger toxin family. Long-chain subfamily. Type II alpha-neurotoxin sub-subfamily.</text>
</comment>
<protein>
    <recommendedName>
        <fullName>Long neurotoxin 3</fullName>
    </recommendedName>
    <alternativeName>
        <fullName evidence="4">Toxin C</fullName>
    </alternativeName>
</protein>
<keyword id="KW-0002">3D-structure</keyword>
<keyword id="KW-0008">Acetylcholine receptor inhibiting toxin</keyword>
<keyword id="KW-0903">Direct protein sequencing</keyword>
<keyword id="KW-1015">Disulfide bond</keyword>
<keyword id="KW-0872">Ion channel impairing toxin</keyword>
<keyword id="KW-0528">Neurotoxin</keyword>
<keyword id="KW-0629">Postsynaptic neurotoxin</keyword>
<keyword id="KW-1185">Reference proteome</keyword>
<keyword id="KW-0964">Secreted</keyword>
<keyword id="KW-0800">Toxin</keyword>
<proteinExistence type="evidence at protein level"/>
<reference key="1">
    <citation type="journal article" date="1981" name="Chem. Pharm. Bull.">
        <title>The primary structure of toxin C from the venom of the Indian cobra (Naja naja).</title>
        <authorList>
            <person name="Ohta M."/>
            <person name="Sasaki T."/>
            <person name="Hayashi K."/>
        </authorList>
    </citation>
    <scope>PROTEIN SEQUENCE</scope>
    <scope>TOXIC DOSE</scope>
    <scope>SUBCELLULAR LOCATION</scope>
    <source>
        <tissue>Venom</tissue>
    </source>
</reference>
<reference key="2">
    <citation type="journal article" date="1991" name="J. Biol. Chem.">
        <title>The refined crystal structure of alpha-cobratoxin from Naja naja siamensis at 2.4-A resolution.</title>
        <authorList>
            <person name="Betzel C."/>
            <person name="Lange G."/>
            <person name="Pal G.P."/>
            <person name="Wilson K.S."/>
            <person name="Maelicke A."/>
            <person name="Saenger W."/>
        </authorList>
    </citation>
    <scope>X-RAY CRYSTALLOGRAPHY (2.4 ANGSTROMS)</scope>
    <scope>DISULFIDE BONDS</scope>
</reference>
<organism>
    <name type="scientific">Naja naja</name>
    <name type="common">Indian cobra</name>
    <dbReference type="NCBI Taxonomy" id="35670"/>
    <lineage>
        <taxon>Eukaryota</taxon>
        <taxon>Metazoa</taxon>
        <taxon>Chordata</taxon>
        <taxon>Craniata</taxon>
        <taxon>Vertebrata</taxon>
        <taxon>Euteleostomi</taxon>
        <taxon>Lepidosauria</taxon>
        <taxon>Squamata</taxon>
        <taxon>Bifurcata</taxon>
        <taxon>Unidentata</taxon>
        <taxon>Episquamata</taxon>
        <taxon>Toxicofera</taxon>
        <taxon>Serpentes</taxon>
        <taxon>Colubroidea</taxon>
        <taxon>Elapidae</taxon>
        <taxon>Elapinae</taxon>
        <taxon>Naja</taxon>
    </lineage>
</organism>
<feature type="chain" id="PRO_0000093549" description="Long neurotoxin 3" evidence="3">
    <location>
        <begin position="1"/>
        <end position="71"/>
    </location>
</feature>
<feature type="disulfide bond" evidence="2 7">
    <location>
        <begin position="3"/>
        <end position="20"/>
    </location>
</feature>
<feature type="disulfide bond" evidence="2 7">
    <location>
        <begin position="14"/>
        <end position="41"/>
    </location>
</feature>
<feature type="disulfide bond" evidence="2 7">
    <location>
        <begin position="26"/>
        <end position="30"/>
    </location>
</feature>
<feature type="disulfide bond" evidence="2 7">
    <location>
        <begin position="45"/>
        <end position="56"/>
    </location>
</feature>
<feature type="disulfide bond" evidence="2 7">
    <location>
        <begin position="57"/>
        <end position="62"/>
    </location>
</feature>
<feature type="strand" evidence="8">
    <location>
        <begin position="2"/>
        <end position="4"/>
    </location>
</feature>
<feature type="strand" evidence="8">
    <location>
        <begin position="10"/>
        <end position="13"/>
    </location>
</feature>
<feature type="strand" evidence="8">
    <location>
        <begin position="19"/>
        <end position="25"/>
    </location>
</feature>
<feature type="turn" evidence="8">
    <location>
        <begin position="28"/>
        <end position="32"/>
    </location>
</feature>
<feature type="strand" evidence="8">
    <location>
        <begin position="36"/>
        <end position="44"/>
    </location>
</feature>
<feature type="strand" evidence="8">
    <location>
        <begin position="53"/>
        <end position="57"/>
    </location>
</feature>
<feature type="strand" evidence="8">
    <location>
        <begin position="67"/>
        <end position="69"/>
    </location>
</feature>
<sequence>IRCFITPDITSKDCPNGHVCYTKTWCDAFCSIRGKRVDLGCAATCPTVKTGVDIQCCSTDDCDPFPTRKRP</sequence>
<name>3L23_NAJNA</name>